<comment type="function">
    <text evidence="1">May control the interaction of photosystem II (PSII) cores with the light-harvesting antenna, regulates electron flow through the 2 photosystem reaction centers. PSII is a light-driven water plastoquinone oxidoreductase, using light energy to abstract electrons from H(2)O, generating a proton gradient subsequently used for ATP formation.</text>
</comment>
<comment type="subunit">
    <text evidence="1">PSII is composed of 1 copy each of membrane proteins PsbA, PsbB, PsbC, PsbD, PsbE, PsbF, PsbH, PsbI, PsbJ, PsbK, PsbL, PsbM, PsbT, PsbY, PsbZ, Psb30/Ycf12, at least 3 peripheral proteins of the oxygen-evolving complex and a large number of cofactors. It forms dimeric complexes.</text>
</comment>
<comment type="subcellular location">
    <subcellularLocation>
        <location evidence="1">Plastid</location>
        <location evidence="1">Chloroplast thylakoid membrane</location>
        <topology evidence="1">Multi-pass membrane protein</topology>
    </subcellularLocation>
</comment>
<comment type="similarity">
    <text evidence="1">Belongs to the PsbZ family.</text>
</comment>
<gene>
    <name evidence="1" type="primary">psbZ</name>
    <name type="synonym">ycf9</name>
    <name type="ordered locus">AtCg00300</name>
</gene>
<proteinExistence type="evidence at protein level"/>
<name>PSBZ_ARATH</name>
<protein>
    <recommendedName>
        <fullName evidence="1">Photosystem II reaction center protein Z</fullName>
        <shortName evidence="1">PSII-Z</shortName>
    </recommendedName>
</protein>
<keyword id="KW-0002">3D-structure</keyword>
<keyword id="KW-0150">Chloroplast</keyword>
<keyword id="KW-0472">Membrane</keyword>
<keyword id="KW-0602">Photosynthesis</keyword>
<keyword id="KW-0604">Photosystem II</keyword>
<keyword id="KW-0934">Plastid</keyword>
<keyword id="KW-0674">Reaction center</keyword>
<keyword id="KW-1185">Reference proteome</keyword>
<keyword id="KW-0793">Thylakoid</keyword>
<keyword id="KW-0812">Transmembrane</keyword>
<keyword id="KW-1133">Transmembrane helix</keyword>
<organism>
    <name type="scientific">Arabidopsis thaliana</name>
    <name type="common">Mouse-ear cress</name>
    <dbReference type="NCBI Taxonomy" id="3702"/>
    <lineage>
        <taxon>Eukaryota</taxon>
        <taxon>Viridiplantae</taxon>
        <taxon>Streptophyta</taxon>
        <taxon>Embryophyta</taxon>
        <taxon>Tracheophyta</taxon>
        <taxon>Spermatophyta</taxon>
        <taxon>Magnoliopsida</taxon>
        <taxon>eudicotyledons</taxon>
        <taxon>Gunneridae</taxon>
        <taxon>Pentapetalae</taxon>
        <taxon>rosids</taxon>
        <taxon>malvids</taxon>
        <taxon>Brassicales</taxon>
        <taxon>Brassicaceae</taxon>
        <taxon>Camelineae</taxon>
        <taxon>Arabidopsis</taxon>
    </lineage>
</organism>
<evidence type="ECO:0000255" key="1">
    <source>
        <dbReference type="HAMAP-Rule" id="MF_00644"/>
    </source>
</evidence>
<evidence type="ECO:0007829" key="2">
    <source>
        <dbReference type="PDB" id="7OUI"/>
    </source>
</evidence>
<accession>P56790</accession>
<sequence length="62" mass="6569">MTIAFQLAVFALIITSSILLISVPVVFASPDGWSSNKNVVFSGTSLWIGLVFLVGILNSLIS</sequence>
<geneLocation type="chloroplast"/>
<dbReference type="EMBL" id="AP000423">
    <property type="protein sequence ID" value="BAA84382.1"/>
    <property type="molecule type" value="Genomic_DNA"/>
</dbReference>
<dbReference type="RefSeq" id="NP_051056.1">
    <property type="nucleotide sequence ID" value="NC_000932.1"/>
</dbReference>
<dbReference type="PDB" id="5MDX">
    <property type="method" value="EM"/>
    <property type="resolution" value="5.30 A"/>
    <property type="chains" value="Z/z=1-62"/>
</dbReference>
<dbReference type="PDB" id="7OUI">
    <property type="method" value="EM"/>
    <property type="resolution" value="2.79 A"/>
    <property type="chains" value="Z/z=1-62"/>
</dbReference>
<dbReference type="PDBsum" id="5MDX"/>
<dbReference type="PDBsum" id="7OUI"/>
<dbReference type="EMDB" id="EMD-13078"/>
<dbReference type="EMDB" id="EMD-3491"/>
<dbReference type="SMR" id="P56790"/>
<dbReference type="FunCoup" id="P56790">
    <property type="interactions" value="43"/>
</dbReference>
<dbReference type="IntAct" id="P56790">
    <property type="interactions" value="1"/>
</dbReference>
<dbReference type="STRING" id="3702.P56790"/>
<dbReference type="TCDB" id="3.E.2.2.3">
    <property type="family name" value="the photosynthetic reaction center (prc) family"/>
</dbReference>
<dbReference type="PaxDb" id="3702-ATCG00300.1"/>
<dbReference type="EnsemblPlants" id="ATCG00300.1">
    <property type="protein sequence ID" value="ATCG00300.1"/>
    <property type="gene ID" value="ATCG00300"/>
</dbReference>
<dbReference type="GeneID" id="844774"/>
<dbReference type="Gramene" id="ATCG00300.1">
    <property type="protein sequence ID" value="ATCG00300.1"/>
    <property type="gene ID" value="ATCG00300"/>
</dbReference>
<dbReference type="KEGG" id="ath:ArthCp019"/>
<dbReference type="Araport" id="ATCG00300"/>
<dbReference type="TAIR" id="ATCG00300">
    <property type="gene designation" value="YCF9"/>
</dbReference>
<dbReference type="eggNOG" id="ENOG502S7KE">
    <property type="taxonomic scope" value="Eukaryota"/>
</dbReference>
<dbReference type="HOGENOM" id="CLU_195286_0_0_1"/>
<dbReference type="InParanoid" id="P56790"/>
<dbReference type="OMA" id="VACRIRN"/>
<dbReference type="PRO" id="PR:P56790"/>
<dbReference type="Proteomes" id="UP000006548">
    <property type="component" value="Chloroplast Pltd"/>
</dbReference>
<dbReference type="ExpressionAtlas" id="P56790">
    <property type="expression patterns" value="baseline and differential"/>
</dbReference>
<dbReference type="GO" id="GO:0009535">
    <property type="term" value="C:chloroplast thylakoid membrane"/>
    <property type="evidence" value="ECO:0007005"/>
    <property type="project" value="TAIR"/>
</dbReference>
<dbReference type="GO" id="GO:0009539">
    <property type="term" value="C:photosystem II reaction center"/>
    <property type="evidence" value="ECO:0007669"/>
    <property type="project" value="InterPro"/>
</dbReference>
<dbReference type="GO" id="GO:0015979">
    <property type="term" value="P:photosynthesis"/>
    <property type="evidence" value="ECO:0007669"/>
    <property type="project" value="UniProtKB-UniRule"/>
</dbReference>
<dbReference type="GO" id="GO:0042549">
    <property type="term" value="P:photosystem II stabilization"/>
    <property type="evidence" value="ECO:0007669"/>
    <property type="project" value="InterPro"/>
</dbReference>
<dbReference type="FunFam" id="1.10.287.740:FF:000001">
    <property type="entry name" value="Photosystem II reaction center protein Z"/>
    <property type="match status" value="1"/>
</dbReference>
<dbReference type="Gene3D" id="1.10.287.740">
    <property type="entry name" value="Photosystem II PsbZ, reaction centre"/>
    <property type="match status" value="1"/>
</dbReference>
<dbReference type="HAMAP" id="MF_00644">
    <property type="entry name" value="PSII_PsbZ"/>
    <property type="match status" value="1"/>
</dbReference>
<dbReference type="InterPro" id="IPR002644">
    <property type="entry name" value="PSII_PsbZ"/>
</dbReference>
<dbReference type="InterPro" id="IPR036512">
    <property type="entry name" value="PSII_PsbZ_sf"/>
</dbReference>
<dbReference type="NCBIfam" id="TIGR03043">
    <property type="entry name" value="PS_II_psbZ"/>
    <property type="match status" value="1"/>
</dbReference>
<dbReference type="PANTHER" id="PTHR34971">
    <property type="entry name" value="PHOTOSYSTEM II REACTION CENTER PROTEIN Z"/>
    <property type="match status" value="1"/>
</dbReference>
<dbReference type="PANTHER" id="PTHR34971:SF2">
    <property type="entry name" value="PHOTOSYSTEM II REACTION CENTER PROTEIN Z"/>
    <property type="match status" value="1"/>
</dbReference>
<dbReference type="Pfam" id="PF01737">
    <property type="entry name" value="Ycf9"/>
    <property type="match status" value="1"/>
</dbReference>
<dbReference type="SUPFAM" id="SSF161055">
    <property type="entry name" value="PsbZ-like"/>
    <property type="match status" value="1"/>
</dbReference>
<feature type="chain" id="PRO_0000217689" description="Photosystem II reaction center protein Z">
    <location>
        <begin position="1"/>
        <end position="62"/>
    </location>
</feature>
<feature type="transmembrane region" description="Helical" evidence="1">
    <location>
        <begin position="8"/>
        <end position="28"/>
    </location>
</feature>
<feature type="transmembrane region" description="Helical" evidence="1">
    <location>
        <begin position="41"/>
        <end position="61"/>
    </location>
</feature>
<feature type="helix" evidence="2">
    <location>
        <begin position="2"/>
        <end position="27"/>
    </location>
</feature>
<feature type="turn" evidence="2">
    <location>
        <begin position="30"/>
        <end position="32"/>
    </location>
</feature>
<feature type="helix" evidence="2">
    <location>
        <begin position="33"/>
        <end position="61"/>
    </location>
</feature>
<reference key="1">
    <citation type="journal article" date="1999" name="DNA Res.">
        <title>Complete structure of the chloroplast genome of Arabidopsis thaliana.</title>
        <authorList>
            <person name="Sato S."/>
            <person name="Nakamura Y."/>
            <person name="Kaneko T."/>
            <person name="Asamizu E."/>
            <person name="Tabata S."/>
        </authorList>
    </citation>
    <scope>NUCLEOTIDE SEQUENCE [LARGE SCALE GENOMIC DNA]</scope>
    <source>
        <strain>cv. Columbia</strain>
    </source>
</reference>